<accession>Q21X17</accession>
<proteinExistence type="inferred from homology"/>
<name>TRHO_ALBFT</name>
<organism>
    <name type="scientific">Albidiferax ferrireducens (strain ATCC BAA-621 / DSM 15236 / T118)</name>
    <name type="common">Rhodoferax ferrireducens</name>
    <dbReference type="NCBI Taxonomy" id="338969"/>
    <lineage>
        <taxon>Bacteria</taxon>
        <taxon>Pseudomonadati</taxon>
        <taxon>Pseudomonadota</taxon>
        <taxon>Betaproteobacteria</taxon>
        <taxon>Burkholderiales</taxon>
        <taxon>Comamonadaceae</taxon>
        <taxon>Rhodoferax</taxon>
    </lineage>
</organism>
<sequence>MTEFLTAAFYKFVELPDFAQLKAPLLTCCEANDVKGTILLATEGINSTIAGPAVGVHAVLAYLRRDPRLADLQHKEAWSAKAPFYRMKVRLKREIVTMGVPGIDPNLVVGTYVKPQDWNALIGDPDVVVIDTRNDYEVGIGTFAGAVNPDIQSFAMLPQWLAQAPALHPATGKKPKVAMFCTGGIRCEKSTALLRAQGFDEVFHLEGGILKYLETIPPEQSLWQGQCFVFDERVSVGHGLIPGQHDLCRACRQPLDDADLASPLFEAGVSCPKCHAITRDIQKDGARERQRQWELAKARQQVHIGASPEPKAMPATAGR</sequence>
<feature type="chain" id="PRO_0000242939" description="tRNA uridine(34) hydroxylase">
    <location>
        <begin position="1"/>
        <end position="319"/>
    </location>
</feature>
<feature type="domain" description="Rhodanese" evidence="1">
    <location>
        <begin position="123"/>
        <end position="221"/>
    </location>
</feature>
<feature type="region of interest" description="Disordered" evidence="2">
    <location>
        <begin position="298"/>
        <end position="319"/>
    </location>
</feature>
<feature type="active site" description="Cysteine persulfide intermediate" evidence="1">
    <location>
        <position position="181"/>
    </location>
</feature>
<reference key="1">
    <citation type="submission" date="2006-02" db="EMBL/GenBank/DDBJ databases">
        <title>Complete sequence of chromosome of Rhodoferax ferrireducens DSM 15236.</title>
        <authorList>
            <person name="Copeland A."/>
            <person name="Lucas S."/>
            <person name="Lapidus A."/>
            <person name="Barry K."/>
            <person name="Detter J.C."/>
            <person name="Glavina del Rio T."/>
            <person name="Hammon N."/>
            <person name="Israni S."/>
            <person name="Pitluck S."/>
            <person name="Brettin T."/>
            <person name="Bruce D."/>
            <person name="Han C."/>
            <person name="Tapia R."/>
            <person name="Gilna P."/>
            <person name="Kiss H."/>
            <person name="Schmutz J."/>
            <person name="Larimer F."/>
            <person name="Land M."/>
            <person name="Kyrpides N."/>
            <person name="Ivanova N."/>
            <person name="Richardson P."/>
        </authorList>
    </citation>
    <scope>NUCLEOTIDE SEQUENCE [LARGE SCALE GENOMIC DNA]</scope>
    <source>
        <strain>ATCC BAA-621 / DSM 15236 / T118</strain>
    </source>
</reference>
<comment type="function">
    <text evidence="1">Catalyzes oxygen-dependent 5-hydroxyuridine (ho5U) modification at position 34 in tRNAs.</text>
</comment>
<comment type="catalytic activity">
    <reaction evidence="1">
        <text>uridine(34) in tRNA + AH2 + O2 = 5-hydroxyuridine(34) in tRNA + A + H2O</text>
        <dbReference type="Rhea" id="RHEA:64224"/>
        <dbReference type="Rhea" id="RHEA-COMP:11727"/>
        <dbReference type="Rhea" id="RHEA-COMP:13381"/>
        <dbReference type="ChEBI" id="CHEBI:13193"/>
        <dbReference type="ChEBI" id="CHEBI:15377"/>
        <dbReference type="ChEBI" id="CHEBI:15379"/>
        <dbReference type="ChEBI" id="CHEBI:17499"/>
        <dbReference type="ChEBI" id="CHEBI:65315"/>
        <dbReference type="ChEBI" id="CHEBI:136877"/>
    </reaction>
</comment>
<comment type="similarity">
    <text evidence="1">Belongs to the TrhO family.</text>
</comment>
<gene>
    <name evidence="1" type="primary">trhO</name>
    <name type="ordered locus">Rfer_1961</name>
</gene>
<protein>
    <recommendedName>
        <fullName evidence="1">tRNA uridine(34) hydroxylase</fullName>
        <ecNumber evidence="1">1.14.-.-</ecNumber>
    </recommendedName>
    <alternativeName>
        <fullName evidence="1">tRNA hydroxylation protein O</fullName>
    </alternativeName>
</protein>
<keyword id="KW-0560">Oxidoreductase</keyword>
<keyword id="KW-1185">Reference proteome</keyword>
<keyword id="KW-0819">tRNA processing</keyword>
<evidence type="ECO:0000255" key="1">
    <source>
        <dbReference type="HAMAP-Rule" id="MF_00469"/>
    </source>
</evidence>
<evidence type="ECO:0000256" key="2">
    <source>
        <dbReference type="SAM" id="MobiDB-lite"/>
    </source>
</evidence>
<dbReference type="EC" id="1.14.-.-" evidence="1"/>
<dbReference type="EMBL" id="CP000267">
    <property type="protein sequence ID" value="ABD69686.1"/>
    <property type="molecule type" value="Genomic_DNA"/>
</dbReference>
<dbReference type="RefSeq" id="WP_011464254.1">
    <property type="nucleotide sequence ID" value="NC_007908.1"/>
</dbReference>
<dbReference type="SMR" id="Q21X17"/>
<dbReference type="STRING" id="338969.Rfer_1961"/>
<dbReference type="KEGG" id="rfr:Rfer_1961"/>
<dbReference type="eggNOG" id="COG1054">
    <property type="taxonomic scope" value="Bacteria"/>
</dbReference>
<dbReference type="HOGENOM" id="CLU_038878_0_0_4"/>
<dbReference type="OrthoDB" id="9778326at2"/>
<dbReference type="Proteomes" id="UP000008332">
    <property type="component" value="Chromosome"/>
</dbReference>
<dbReference type="GO" id="GO:0016705">
    <property type="term" value="F:oxidoreductase activity, acting on paired donors, with incorporation or reduction of molecular oxygen"/>
    <property type="evidence" value="ECO:0007669"/>
    <property type="project" value="UniProtKB-UniRule"/>
</dbReference>
<dbReference type="GO" id="GO:0006400">
    <property type="term" value="P:tRNA modification"/>
    <property type="evidence" value="ECO:0007669"/>
    <property type="project" value="UniProtKB-UniRule"/>
</dbReference>
<dbReference type="CDD" id="cd01518">
    <property type="entry name" value="RHOD_YceA"/>
    <property type="match status" value="1"/>
</dbReference>
<dbReference type="Gene3D" id="3.30.70.100">
    <property type="match status" value="1"/>
</dbReference>
<dbReference type="Gene3D" id="3.40.250.10">
    <property type="entry name" value="Rhodanese-like domain"/>
    <property type="match status" value="1"/>
</dbReference>
<dbReference type="HAMAP" id="MF_00469">
    <property type="entry name" value="TrhO"/>
    <property type="match status" value="1"/>
</dbReference>
<dbReference type="InterPro" id="IPR001763">
    <property type="entry name" value="Rhodanese-like_dom"/>
</dbReference>
<dbReference type="InterPro" id="IPR036873">
    <property type="entry name" value="Rhodanese-like_dom_sf"/>
</dbReference>
<dbReference type="InterPro" id="IPR020936">
    <property type="entry name" value="TrhO"/>
</dbReference>
<dbReference type="InterPro" id="IPR040503">
    <property type="entry name" value="TRHO_N"/>
</dbReference>
<dbReference type="NCBIfam" id="NF001136">
    <property type="entry name" value="PRK00142.1-4"/>
    <property type="match status" value="1"/>
</dbReference>
<dbReference type="PANTHER" id="PTHR43268:SF3">
    <property type="entry name" value="RHODANESE-LIKE DOMAIN-CONTAINING PROTEIN 7-RELATED"/>
    <property type="match status" value="1"/>
</dbReference>
<dbReference type="PANTHER" id="PTHR43268">
    <property type="entry name" value="THIOSULFATE SULFURTRANSFERASE/RHODANESE-LIKE DOMAIN-CONTAINING PROTEIN 2"/>
    <property type="match status" value="1"/>
</dbReference>
<dbReference type="Pfam" id="PF00581">
    <property type="entry name" value="Rhodanese"/>
    <property type="match status" value="1"/>
</dbReference>
<dbReference type="Pfam" id="PF17773">
    <property type="entry name" value="UPF0176_N"/>
    <property type="match status" value="1"/>
</dbReference>
<dbReference type="SMART" id="SM00450">
    <property type="entry name" value="RHOD"/>
    <property type="match status" value="1"/>
</dbReference>
<dbReference type="SUPFAM" id="SSF52821">
    <property type="entry name" value="Rhodanese/Cell cycle control phosphatase"/>
    <property type="match status" value="1"/>
</dbReference>
<dbReference type="PROSITE" id="PS50206">
    <property type="entry name" value="RHODANESE_3"/>
    <property type="match status" value="1"/>
</dbReference>